<keyword id="KW-0509">mRNA transport</keyword>
<keyword id="KW-0539">Nucleus</keyword>
<keyword id="KW-1185">Reference proteome</keyword>
<keyword id="KW-0694">RNA-binding</keyword>
<keyword id="KW-0813">Transport</keyword>
<comment type="function">
    <text evidence="1">Required for mRNA export from the nucleus to the cytoplasm. Acts as an adapter that uses the DDX39B/UAP56-NFX1 pathway to ensure efficient mRNA export and delivering to the nuclear pore (By similarity).</text>
</comment>
<comment type="subcellular location">
    <subcellularLocation>
        <location evidence="1">Nucleus</location>
        <location evidence="1">Nucleoplasm</location>
    </subcellularLocation>
    <subcellularLocation>
        <location evidence="1">Nucleus speckle</location>
    </subcellularLocation>
</comment>
<comment type="tissue specificity">
    <text evidence="3">Widely expressed.</text>
</comment>
<comment type="similarity">
    <text evidence="4">Belongs to the UIF family.</text>
</comment>
<dbReference type="EMBL" id="AJ720614">
    <property type="protein sequence ID" value="CAG32273.1"/>
    <property type="molecule type" value="mRNA"/>
</dbReference>
<dbReference type="RefSeq" id="NP_001026487.1">
    <property type="nucleotide sequence ID" value="NM_001031316.1"/>
</dbReference>
<dbReference type="FunCoup" id="Q5ZJ20">
    <property type="interactions" value="1210"/>
</dbReference>
<dbReference type="STRING" id="9031.ENSGALP00000059362"/>
<dbReference type="GlyGen" id="Q5ZJ20">
    <property type="glycosylation" value="1 site"/>
</dbReference>
<dbReference type="PaxDb" id="9031-ENSGALP00000012245"/>
<dbReference type="GeneID" id="424921"/>
<dbReference type="KEGG" id="gga:424921"/>
<dbReference type="CTD" id="84248"/>
<dbReference type="VEuPathDB" id="HostDB:geneid_424921"/>
<dbReference type="eggNOG" id="ENOG502QWD4">
    <property type="taxonomic scope" value="Eukaryota"/>
</dbReference>
<dbReference type="HOGENOM" id="CLU_076911_0_0_1"/>
<dbReference type="InParanoid" id="Q5ZJ20"/>
<dbReference type="OrthoDB" id="9938627at2759"/>
<dbReference type="PhylomeDB" id="Q5ZJ20"/>
<dbReference type="TreeFam" id="TF336232"/>
<dbReference type="Reactome" id="R-GGA-72187">
    <property type="pathway name" value="mRNA 3'-end processing"/>
</dbReference>
<dbReference type="Reactome" id="R-GGA-73856">
    <property type="pathway name" value="RNA Polymerase II Transcription Termination"/>
</dbReference>
<dbReference type="PRO" id="PR:Q5ZJ20"/>
<dbReference type="Proteomes" id="UP000000539">
    <property type="component" value="Chromosome 9"/>
</dbReference>
<dbReference type="Bgee" id="ENSGALG00000007581">
    <property type="expression patterns" value="Expressed in spermatid and 14 other cell types or tissues"/>
</dbReference>
<dbReference type="GO" id="GO:0016607">
    <property type="term" value="C:nuclear speck"/>
    <property type="evidence" value="ECO:0000250"/>
    <property type="project" value="UniProtKB"/>
</dbReference>
<dbReference type="GO" id="GO:0005654">
    <property type="term" value="C:nucleoplasm"/>
    <property type="evidence" value="ECO:0000250"/>
    <property type="project" value="UniProtKB"/>
</dbReference>
<dbReference type="GO" id="GO:0003729">
    <property type="term" value="F:mRNA binding"/>
    <property type="evidence" value="ECO:0000250"/>
    <property type="project" value="UniProtKB"/>
</dbReference>
<dbReference type="GO" id="GO:0006406">
    <property type="term" value="P:mRNA export from nucleus"/>
    <property type="evidence" value="ECO:0000250"/>
    <property type="project" value="UniProtKB"/>
</dbReference>
<dbReference type="InterPro" id="IPR009782">
    <property type="entry name" value="FYTTD1"/>
</dbReference>
<dbReference type="PANTHER" id="PTHR21038">
    <property type="entry name" value="40-2-3 PROTEIN-RELATED"/>
    <property type="match status" value="1"/>
</dbReference>
<dbReference type="PANTHER" id="PTHR21038:SF2">
    <property type="entry name" value="UAP56-INTERACTING FACTOR"/>
    <property type="match status" value="1"/>
</dbReference>
<dbReference type="Pfam" id="PF07078">
    <property type="entry name" value="FYTT"/>
    <property type="match status" value="1"/>
</dbReference>
<reference key="1">
    <citation type="journal article" date="2005" name="Genome Biol.">
        <title>Full-length cDNAs from chicken bursal lymphocytes to facilitate gene function analysis.</title>
        <authorList>
            <person name="Caldwell R.B."/>
            <person name="Kierzek A.M."/>
            <person name="Arakawa H."/>
            <person name="Bezzubov Y."/>
            <person name="Zaim J."/>
            <person name="Fiedler P."/>
            <person name="Kutter S."/>
            <person name="Blagodatski A."/>
            <person name="Kostovska D."/>
            <person name="Koter M."/>
            <person name="Plachy J."/>
            <person name="Carninci P."/>
            <person name="Hayashizaki Y."/>
            <person name="Buerstedde J.-M."/>
        </authorList>
    </citation>
    <scope>NUCLEOTIDE SEQUENCE [LARGE SCALE MRNA]</scope>
    <source>
        <strain>CB</strain>
        <tissue>Bursa of Fabricius</tissue>
    </source>
</reference>
<reference key="2">
    <citation type="journal article" date="2009" name="Curr. Biol.">
        <title>UIF, a new mRNA export adaptor that works together with REF/ALY, requires FACT for recruitment to mRNA.</title>
        <authorList>
            <person name="Hautbergue G.M."/>
            <person name="Hung M.L."/>
            <person name="Walsh M.J."/>
            <person name="Snijders A.P."/>
            <person name="Chang C.T."/>
            <person name="Jones R."/>
            <person name="Ponting C.P."/>
            <person name="Dickman M.J."/>
            <person name="Wilson S.A."/>
        </authorList>
    </citation>
    <scope>TISSUE SPECIFICITY</scope>
</reference>
<feature type="chain" id="PRO_0000287443" description="UAP56-interacting factor">
    <location>
        <begin position="1"/>
        <end position="307"/>
    </location>
</feature>
<feature type="region of interest" description="Disordered" evidence="2">
    <location>
        <begin position="1"/>
        <end position="28"/>
    </location>
</feature>
<feature type="region of interest" description="Disordered" evidence="2">
    <location>
        <begin position="41"/>
        <end position="85"/>
    </location>
</feature>
<feature type="short sequence motif" description="UAP56-binding motif">
    <location>
        <begin position="26"/>
        <end position="44"/>
    </location>
</feature>
<feature type="compositionally biased region" description="Low complexity" evidence="2">
    <location>
        <begin position="1"/>
        <end position="25"/>
    </location>
</feature>
<feature type="compositionally biased region" description="Polar residues" evidence="2">
    <location>
        <begin position="57"/>
        <end position="78"/>
    </location>
</feature>
<accession>Q5ZJ20</accession>
<gene>
    <name type="primary">FYTTD1</name>
    <name type="synonym">UIF</name>
    <name type="ORF">RCJMB04_21k3</name>
</gene>
<evidence type="ECO:0000250" key="1"/>
<evidence type="ECO:0000256" key="2">
    <source>
        <dbReference type="SAM" id="MobiDB-lite"/>
    </source>
</evidence>
<evidence type="ECO:0000269" key="3">
    <source>
    </source>
</evidence>
<evidence type="ECO:0000305" key="4"/>
<organism>
    <name type="scientific">Gallus gallus</name>
    <name type="common">Chicken</name>
    <dbReference type="NCBI Taxonomy" id="9031"/>
    <lineage>
        <taxon>Eukaryota</taxon>
        <taxon>Metazoa</taxon>
        <taxon>Chordata</taxon>
        <taxon>Craniata</taxon>
        <taxon>Vertebrata</taxon>
        <taxon>Euteleostomi</taxon>
        <taxon>Archelosauria</taxon>
        <taxon>Archosauria</taxon>
        <taxon>Dinosauria</taxon>
        <taxon>Saurischia</taxon>
        <taxon>Theropoda</taxon>
        <taxon>Coelurosauria</taxon>
        <taxon>Aves</taxon>
        <taxon>Neognathae</taxon>
        <taxon>Galloanserae</taxon>
        <taxon>Galliformes</taxon>
        <taxon>Phasianidae</taxon>
        <taxon>Phasianinae</taxon>
        <taxon>Gallus</taxon>
    </lineage>
</organism>
<proteinExistence type="evidence at transcript level"/>
<sequence length="307" mass="34332">MSGFGAAALLSGSSAAAGTRSGSSDSLEKIDMSLDDIIKLNKKEERKQYSPKMKRGLQQNRTQQFRTPGSKWGIQQQKGYGKNHLGHRKKIVGKKRPYGVITGLAAKKAMGSHKGISPLNRQPLSEKNTQRNYPILKKKPNLQRQTEMQRKQIPALRRPAPLSRRIGNKLNQQKDTRQATFLFRRGLKVQAQVQPTEDLDNQAAKRTRQWRTSTTSGGILTVSIENPGAIITPISQKLRLTRTPVPPFLMKKDQSEEKKIPKGVPLQFDINSVGKQTGMTLNERFGILKEQRTALSQNKGSRFVTVG</sequence>
<protein>
    <recommendedName>
        <fullName>UAP56-interacting factor</fullName>
    </recommendedName>
    <alternativeName>
        <fullName>Forty-two-three domain-containing protein 1</fullName>
        <shortName>Protein 40-2-3</shortName>
    </alternativeName>
</protein>
<name>UIF_CHICK</name>